<feature type="initiator methionine" description="Removed" evidence="3">
    <location>
        <position position="1"/>
    </location>
</feature>
<feature type="chain" id="PRO_0000431552" description="Methanol dehydrogenase activator">
    <location>
        <begin position="2"/>
        <end position="185"/>
    </location>
</feature>
<feature type="sequence conflict" description="In Ref. 2; AA sequence." evidence="6" ref="2">
    <original>V</original>
    <variation>R</variation>
    <location>
        <position position="28"/>
    </location>
</feature>
<feature type="sequence conflict" description="In Ref. 2; AA sequence." evidence="6" ref="2">
    <original>L</original>
    <variation>Y</variation>
    <location>
        <position position="30"/>
    </location>
</feature>
<feature type="sequence conflict" description="In Ref. 2; AA sequence." evidence="6" ref="2">
    <original>S</original>
    <variation>V</variation>
    <location>
        <position position="36"/>
    </location>
</feature>
<reference key="1">
    <citation type="journal article" date="2002" name="J. Biol. Chem.">
        <title>Molecular, biochemical, and functional characterization of a Nudix hydrolase protein that stimulates the activity of a nicotinoprotein alcohol dehydrogenase.</title>
        <authorList>
            <person name="Kloosterman H."/>
            <person name="Vrijbloed J.W."/>
            <person name="Dijkhuizen L."/>
        </authorList>
    </citation>
    <scope>NUCLEOTIDE SEQUENCE [GENOMIC DNA]</scope>
    <scope>FUNCTION</scope>
    <scope>SUBUNIT</scope>
    <scope>SUBSTRATE SPECIFICITY</scope>
    <source>
        <strain>C1</strain>
    </source>
</reference>
<reference key="2">
    <citation type="journal article" date="1991" name="J. Biol. Chem.">
        <title>Purification and characterization of an activator protein for methanol dehydrogenase from thermotolerant Bacillus spp.</title>
        <authorList>
            <person name="Arfman N."/>
            <person name="Van Beeumen J."/>
            <person name="De Vries G.E."/>
            <person name="Harder W."/>
            <person name="Dijkhuizen L."/>
        </authorList>
    </citation>
    <scope>PROTEIN SEQUENCE OF 2-36</scope>
    <scope>FUNCTION</scope>
    <scope>BIOPHYSICOCHEMICAL PROPERTIES</scope>
    <scope>SUBUNIT</scope>
    <scope>COFACTOR</scope>
    <source>
        <strain>C1</strain>
    </source>
</reference>
<proteinExistence type="evidence at protein level"/>
<accession>Q8KP10</accession>
<accession>Q7M0S6</accession>
<dbReference type="EC" id="3.-.-.-" evidence="7"/>
<dbReference type="EMBL" id="AY128667">
    <property type="protein sequence ID" value="AAM98772.1"/>
    <property type="molecule type" value="Genomic_DNA"/>
</dbReference>
<dbReference type="PIR" id="A38659">
    <property type="entry name" value="A38659"/>
</dbReference>
<dbReference type="RefSeq" id="WP_274855033.1">
    <property type="nucleotide sequence ID" value="NZ_PNFF01000001.1"/>
</dbReference>
<dbReference type="SMR" id="Q8KP10"/>
<dbReference type="SABIO-RK" id="Q8KP10"/>
<dbReference type="GO" id="GO:0005829">
    <property type="term" value="C:cytosol"/>
    <property type="evidence" value="ECO:0007669"/>
    <property type="project" value="TreeGrafter"/>
</dbReference>
<dbReference type="GO" id="GO:0016787">
    <property type="term" value="F:hydrolase activity"/>
    <property type="evidence" value="ECO:0000314"/>
    <property type="project" value="UniProtKB"/>
</dbReference>
<dbReference type="GO" id="GO:0016818">
    <property type="term" value="F:hydrolase activity, acting on acid anhydrides, in phosphorus-containing anhydrides"/>
    <property type="evidence" value="ECO:0007669"/>
    <property type="project" value="InterPro"/>
</dbReference>
<dbReference type="GO" id="GO:0000287">
    <property type="term" value="F:magnesium ion binding"/>
    <property type="evidence" value="ECO:0000314"/>
    <property type="project" value="UniProtKB"/>
</dbReference>
<dbReference type="GO" id="GO:0006753">
    <property type="term" value="P:nucleoside phosphate metabolic process"/>
    <property type="evidence" value="ECO:0007669"/>
    <property type="project" value="TreeGrafter"/>
</dbReference>
<dbReference type="GO" id="GO:0019693">
    <property type="term" value="P:ribose phosphate metabolic process"/>
    <property type="evidence" value="ECO:0007669"/>
    <property type="project" value="TreeGrafter"/>
</dbReference>
<dbReference type="FunFam" id="3.90.79.10:FF:000024">
    <property type="entry name" value="ADP-ribose pyrophosphatase"/>
    <property type="match status" value="1"/>
</dbReference>
<dbReference type="Gene3D" id="3.90.79.10">
    <property type="entry name" value="Nucleoside Triphosphate Pyrophosphohydrolase"/>
    <property type="match status" value="1"/>
</dbReference>
<dbReference type="InterPro" id="IPR004385">
    <property type="entry name" value="NDP_pyrophosphatase"/>
</dbReference>
<dbReference type="InterPro" id="IPR015797">
    <property type="entry name" value="NUDIX_hydrolase-like_dom_sf"/>
</dbReference>
<dbReference type="InterPro" id="IPR020084">
    <property type="entry name" value="NUDIX_hydrolase_CS"/>
</dbReference>
<dbReference type="InterPro" id="IPR000086">
    <property type="entry name" value="NUDIX_hydrolase_dom"/>
</dbReference>
<dbReference type="NCBIfam" id="TIGR00052">
    <property type="entry name" value="nudix-type nucleoside diphosphatase, YffH/AdpP family"/>
    <property type="match status" value="1"/>
</dbReference>
<dbReference type="PANTHER" id="PTHR11839:SF18">
    <property type="entry name" value="NUDIX HYDROLASE DOMAIN-CONTAINING PROTEIN"/>
    <property type="match status" value="1"/>
</dbReference>
<dbReference type="PANTHER" id="PTHR11839">
    <property type="entry name" value="UDP/ADP-SUGAR PYROPHOSPHATASE"/>
    <property type="match status" value="1"/>
</dbReference>
<dbReference type="Pfam" id="PF00293">
    <property type="entry name" value="NUDIX"/>
    <property type="match status" value="1"/>
</dbReference>
<dbReference type="SUPFAM" id="SSF55811">
    <property type="entry name" value="Nudix"/>
    <property type="match status" value="1"/>
</dbReference>
<dbReference type="PROSITE" id="PS51462">
    <property type="entry name" value="NUDIX"/>
    <property type="match status" value="1"/>
</dbReference>
<dbReference type="PROSITE" id="PS00893">
    <property type="entry name" value="NUDIX_BOX"/>
    <property type="match status" value="1"/>
</dbReference>
<name>ACT_BACMT</name>
<gene>
    <name evidence="4" type="primary">act</name>
</gene>
<protein>
    <recommendedName>
        <fullName evidence="4">Methanol dehydrogenase activator</fullName>
        <ecNumber evidence="7">3.-.-.-</ecNumber>
    </recommendedName>
    <alternativeName>
        <fullName evidence="5">MDH activator</fullName>
    </alternativeName>
</protein>
<evidence type="ECO:0000255" key="1">
    <source>
        <dbReference type="RuleBase" id="RU003476"/>
    </source>
</evidence>
<evidence type="ECO:0000269" key="2">
    <source>
    </source>
</evidence>
<evidence type="ECO:0000269" key="3">
    <source>
    </source>
</evidence>
<evidence type="ECO:0000303" key="4">
    <source>
    </source>
</evidence>
<evidence type="ECO:0000303" key="5">
    <source>
    </source>
</evidence>
<evidence type="ECO:0000305" key="6"/>
<evidence type="ECO:0000305" key="7">
    <source>
    </source>
</evidence>
<comment type="function">
    <text evidence="2 3">Involved in the activation of the NAD-dependent methanol dehydrogenase (MDH). MDH activation by Act involves hydrolytic removal of the nicotinamide mononucleotide (NMN) moiety of the NAD cofactor, changing its ping-pong type of reaction mechanism into a ternary complex reaction mechanism. It requires the presence of magnesium ions and is also able to use ADP-ribose.</text>
</comment>
<comment type="cofactor">
    <cofactor evidence="3">
        <name>Mg(2+)</name>
        <dbReference type="ChEBI" id="CHEBI:18420"/>
    </cofactor>
</comment>
<comment type="biophysicochemical properties">
    <kinetics>
        <KM evidence="2">63 uM for ADP-ribose (at pH 9.5 and 50 degrees Celsius)</KM>
        <KM evidence="2">8.28 mM for NAD (at pH 9.5 and 50 degrees Celsius)</KM>
        <Vmax evidence="2">10.6 umol/min/mg enzyme with NAD as substrate (at pH 9.5 and 50 degrees Celsius)</Vmax>
        <Vmax evidence="2">347.8 umol/min/mg enzyme with ADP-ribose as substrate (at pH 9.5 and 50 degrees Celsius)</Vmax>
        <text evidence="2">kcat is 129 sec(-1) for hydrolase activity with ADP-ribose (at pH 9.5 and 50 degrees Celsius). kcat is 3.9 sec(-1) for hydrolase activity with NAD (at pH 9.5 and 50 degrees Celsius).</text>
    </kinetics>
</comment>
<comment type="subunit">
    <text evidence="2 3">Homodimer.</text>
</comment>
<comment type="similarity">
    <text evidence="1">Belongs to the Nudix hydrolase family.</text>
</comment>
<organism>
    <name type="scientific">Bacillus methanolicus</name>
    <dbReference type="NCBI Taxonomy" id="1471"/>
    <lineage>
        <taxon>Bacteria</taxon>
        <taxon>Bacillati</taxon>
        <taxon>Bacillota</taxon>
        <taxon>Bacilli</taxon>
        <taxon>Bacillales</taxon>
        <taxon>Bacillaceae</taxon>
        <taxon>Bacillus</taxon>
    </lineage>
</organism>
<keyword id="KW-0903">Direct protein sequencing</keyword>
<keyword id="KW-0378">Hydrolase</keyword>
<sequence length="185" mass="21048">MGKLFEEKTIKTEQIFSGRVVKLQVDDVELPNGQTSKREIVRHPGAVAVIAITNENKIVMVEQYRKPLEKSIVEIPAGKLEKGEDPRVTALRELEEETGYECEQMEWLISFATSPGFADEIIHLYVAKGLSKKENAAGLDEDEFVDLIELTLDEALQYIKEKRIYDSKTVIAVQYLQLQEALKHK</sequence>